<reference key="1">
    <citation type="submission" date="2004-11" db="EMBL/GenBank/DDBJ databases">
        <authorList>
            <consortium name="The German cDNA consortium"/>
        </authorList>
    </citation>
    <scope>NUCLEOTIDE SEQUENCE [LARGE SCALE MRNA]</scope>
    <source>
        <tissue>Kidney</tissue>
    </source>
</reference>
<proteinExistence type="evidence at transcript level"/>
<name>ZN791_PONAB</name>
<keyword id="KW-0238">DNA-binding</keyword>
<keyword id="KW-0479">Metal-binding</keyword>
<keyword id="KW-0539">Nucleus</keyword>
<keyword id="KW-1185">Reference proteome</keyword>
<keyword id="KW-0677">Repeat</keyword>
<keyword id="KW-0804">Transcription</keyword>
<keyword id="KW-0805">Transcription regulation</keyword>
<keyword id="KW-0862">Zinc</keyword>
<keyword id="KW-0863">Zinc-finger</keyword>
<evidence type="ECO:0000255" key="1">
    <source>
        <dbReference type="PROSITE-ProRule" id="PRU00042"/>
    </source>
</evidence>
<evidence type="ECO:0000255" key="2">
    <source>
        <dbReference type="PROSITE-ProRule" id="PRU00119"/>
    </source>
</evidence>
<evidence type="ECO:0000305" key="3"/>
<feature type="chain" id="PRO_0000311800" description="Zinc finger protein 791">
    <location>
        <begin position="1"/>
        <end position="576"/>
    </location>
</feature>
<feature type="domain" description="KRAB" evidence="2">
    <location>
        <begin position="4"/>
        <end position="90"/>
    </location>
</feature>
<feature type="zinc finger region" description="C2H2-type 1" evidence="1">
    <location>
        <begin position="100"/>
        <end position="122"/>
    </location>
</feature>
<feature type="zinc finger region" description="C2H2-type 2" evidence="1">
    <location>
        <begin position="132"/>
        <end position="154"/>
    </location>
</feature>
<feature type="zinc finger region" description="C2H2-type 3" evidence="1">
    <location>
        <begin position="160"/>
        <end position="182"/>
    </location>
</feature>
<feature type="zinc finger region" description="C2H2-type 4" evidence="1">
    <location>
        <begin position="188"/>
        <end position="210"/>
    </location>
</feature>
<feature type="zinc finger region" description="C2H2-type 5" evidence="1">
    <location>
        <begin position="216"/>
        <end position="238"/>
    </location>
</feature>
<feature type="zinc finger region" description="C2H2-type 6" evidence="1">
    <location>
        <begin position="244"/>
        <end position="266"/>
    </location>
</feature>
<feature type="zinc finger region" description="C2H2-type 7" evidence="1">
    <location>
        <begin position="272"/>
        <end position="294"/>
    </location>
</feature>
<feature type="zinc finger region" description="C2H2-type 8" evidence="1">
    <location>
        <begin position="300"/>
        <end position="322"/>
    </location>
</feature>
<feature type="zinc finger region" description="C2H2-type 9" evidence="1">
    <location>
        <begin position="328"/>
        <end position="350"/>
    </location>
</feature>
<feature type="zinc finger region" description="C2H2-type 10" evidence="1">
    <location>
        <begin position="356"/>
        <end position="378"/>
    </location>
</feature>
<feature type="zinc finger region" description="C2H2-type 11" evidence="1">
    <location>
        <begin position="384"/>
        <end position="406"/>
    </location>
</feature>
<feature type="zinc finger region" description="C2H2-type 12" evidence="1">
    <location>
        <begin position="412"/>
        <end position="434"/>
    </location>
</feature>
<feature type="zinc finger region" description="C2H2-type 13" evidence="1">
    <location>
        <begin position="440"/>
        <end position="462"/>
    </location>
</feature>
<feature type="zinc finger region" description="C2H2-type 14" evidence="1">
    <location>
        <begin position="468"/>
        <end position="490"/>
    </location>
</feature>
<feature type="zinc finger region" description="C2H2-type 15" evidence="1">
    <location>
        <begin position="496"/>
        <end position="518"/>
    </location>
</feature>
<feature type="zinc finger region" description="C2H2-type 16" evidence="1">
    <location>
        <begin position="524"/>
        <end position="546"/>
    </location>
</feature>
<feature type="zinc finger region" description="C2H2-type 17" evidence="1">
    <location>
        <begin position="552"/>
        <end position="574"/>
    </location>
</feature>
<accession>Q5REI6</accession>
<dbReference type="EMBL" id="CR857542">
    <property type="protein sequence ID" value="CAH89821.1"/>
    <property type="molecule type" value="mRNA"/>
</dbReference>
<dbReference type="RefSeq" id="NP_001127200.1">
    <property type="nucleotide sequence ID" value="NM_001133728.1"/>
</dbReference>
<dbReference type="SMR" id="Q5REI6"/>
<dbReference type="STRING" id="9601.ENSPPYP00000010759"/>
<dbReference type="GeneID" id="100174255"/>
<dbReference type="KEGG" id="pon:100174255"/>
<dbReference type="CTD" id="163049"/>
<dbReference type="eggNOG" id="KOG1721">
    <property type="taxonomic scope" value="Eukaryota"/>
</dbReference>
<dbReference type="InParanoid" id="Q5REI6"/>
<dbReference type="OrthoDB" id="1095242at2759"/>
<dbReference type="Proteomes" id="UP000001595">
    <property type="component" value="Unplaced"/>
</dbReference>
<dbReference type="GO" id="GO:0005634">
    <property type="term" value="C:nucleus"/>
    <property type="evidence" value="ECO:0007669"/>
    <property type="project" value="UniProtKB-SubCell"/>
</dbReference>
<dbReference type="GO" id="GO:0003700">
    <property type="term" value="F:DNA-binding transcription factor activity"/>
    <property type="evidence" value="ECO:0007669"/>
    <property type="project" value="TreeGrafter"/>
</dbReference>
<dbReference type="GO" id="GO:0000978">
    <property type="term" value="F:RNA polymerase II cis-regulatory region sequence-specific DNA binding"/>
    <property type="evidence" value="ECO:0007669"/>
    <property type="project" value="TreeGrafter"/>
</dbReference>
<dbReference type="GO" id="GO:0008270">
    <property type="term" value="F:zinc ion binding"/>
    <property type="evidence" value="ECO:0007669"/>
    <property type="project" value="UniProtKB-KW"/>
</dbReference>
<dbReference type="GO" id="GO:0006357">
    <property type="term" value="P:regulation of transcription by RNA polymerase II"/>
    <property type="evidence" value="ECO:0007669"/>
    <property type="project" value="TreeGrafter"/>
</dbReference>
<dbReference type="CDD" id="cd07765">
    <property type="entry name" value="KRAB_A-box"/>
    <property type="match status" value="1"/>
</dbReference>
<dbReference type="FunFam" id="3.30.160.60:FF:000838">
    <property type="entry name" value="Zinc finger protein 14"/>
    <property type="match status" value="1"/>
</dbReference>
<dbReference type="FunFam" id="3.30.160.60:FF:000193">
    <property type="entry name" value="Zinc finger protein 300"/>
    <property type="match status" value="1"/>
</dbReference>
<dbReference type="FunFam" id="3.30.160.60:FF:000184">
    <property type="entry name" value="Zinc finger protein 333"/>
    <property type="match status" value="2"/>
</dbReference>
<dbReference type="FunFam" id="3.30.160.60:FF:002343">
    <property type="entry name" value="Zinc finger protein 33A"/>
    <property type="match status" value="1"/>
</dbReference>
<dbReference type="FunFam" id="3.30.160.60:FF:001505">
    <property type="entry name" value="Zinc finger protein 540"/>
    <property type="match status" value="1"/>
</dbReference>
<dbReference type="FunFam" id="3.30.160.60:FF:002254">
    <property type="entry name" value="Zinc finger protein 540"/>
    <property type="match status" value="2"/>
</dbReference>
<dbReference type="FunFam" id="3.30.160.60:FF:000371">
    <property type="entry name" value="Zinc finger protein 555"/>
    <property type="match status" value="1"/>
</dbReference>
<dbReference type="FunFam" id="3.30.160.60:FF:000156">
    <property type="entry name" value="Zinc finger protein 568"/>
    <property type="match status" value="5"/>
</dbReference>
<dbReference type="FunFam" id="3.30.160.60:FF:000350">
    <property type="entry name" value="Zinc finger protein 699"/>
    <property type="match status" value="1"/>
</dbReference>
<dbReference type="FunFam" id="3.30.160.60:FF:000493">
    <property type="entry name" value="Zinc finger protein 805"/>
    <property type="match status" value="1"/>
</dbReference>
<dbReference type="FunFam" id="3.30.160.60:FF:001933">
    <property type="entry name" value="Zinc finger protein 870"/>
    <property type="match status" value="1"/>
</dbReference>
<dbReference type="Gene3D" id="6.10.140.140">
    <property type="match status" value="1"/>
</dbReference>
<dbReference type="Gene3D" id="3.30.160.60">
    <property type="entry name" value="Classic Zinc Finger"/>
    <property type="match status" value="17"/>
</dbReference>
<dbReference type="InterPro" id="IPR050589">
    <property type="entry name" value="Ikaros_C2H2-ZF"/>
</dbReference>
<dbReference type="InterPro" id="IPR001909">
    <property type="entry name" value="KRAB"/>
</dbReference>
<dbReference type="InterPro" id="IPR036051">
    <property type="entry name" value="KRAB_dom_sf"/>
</dbReference>
<dbReference type="InterPro" id="IPR036236">
    <property type="entry name" value="Znf_C2H2_sf"/>
</dbReference>
<dbReference type="InterPro" id="IPR013087">
    <property type="entry name" value="Znf_C2H2_type"/>
</dbReference>
<dbReference type="PANTHER" id="PTHR24404">
    <property type="entry name" value="ZINC FINGER PROTEIN"/>
    <property type="match status" value="1"/>
</dbReference>
<dbReference type="PANTHER" id="PTHR24404:SF10">
    <property type="entry name" value="ZINC FINGER PROTEIN 564"/>
    <property type="match status" value="1"/>
</dbReference>
<dbReference type="Pfam" id="PF01352">
    <property type="entry name" value="KRAB"/>
    <property type="match status" value="1"/>
</dbReference>
<dbReference type="Pfam" id="PF00096">
    <property type="entry name" value="zf-C2H2"/>
    <property type="match status" value="14"/>
</dbReference>
<dbReference type="SMART" id="SM00349">
    <property type="entry name" value="KRAB"/>
    <property type="match status" value="1"/>
</dbReference>
<dbReference type="SMART" id="SM00355">
    <property type="entry name" value="ZnF_C2H2"/>
    <property type="match status" value="17"/>
</dbReference>
<dbReference type="SUPFAM" id="SSF57667">
    <property type="entry name" value="beta-beta-alpha zinc fingers"/>
    <property type="match status" value="10"/>
</dbReference>
<dbReference type="SUPFAM" id="SSF109640">
    <property type="entry name" value="KRAB domain (Kruppel-associated box)"/>
    <property type="match status" value="1"/>
</dbReference>
<dbReference type="PROSITE" id="PS50805">
    <property type="entry name" value="KRAB"/>
    <property type="match status" value="1"/>
</dbReference>
<dbReference type="PROSITE" id="PS00028">
    <property type="entry name" value="ZINC_FINGER_C2H2_1"/>
    <property type="match status" value="17"/>
</dbReference>
<dbReference type="PROSITE" id="PS50157">
    <property type="entry name" value="ZINC_FINGER_C2H2_2"/>
    <property type="match status" value="17"/>
</dbReference>
<sequence>MDSVAFKDVSVSFSQEEWALLAPSQKKLYRDVMQETFKNLASIGEKWEDPNVEDQHRNQGRNLRSHMGERLCEGKEGSQCAETFSPNLSVTKKTAGVKPYECTICGKVFMRLSSLTRHMRSHTGYELFEKPYKCKECGKAFSYLKSFQRHERSHTGEKPYKCKQCGKTFIYHQPFQRHEQTHIGEKPYECKQCGKALSCSSSLRVHERIHTGEKPYECKQCGKAFSCSSSIRVHERTHTGEKPYACKECGKAFISHTSVLTHMITHNGDRPYKCKECGKAFIFPSFLRVHERIHTGEKPYTCKQCGKAFRCSTSIQIHERIHTGEKPYKCKECGKSFSARPAFRVHVRVHTGEKPYKCKECGKAFSRISYFRIHERTHTGEKPYECKKCGKTFNYPLDLQIHKRNHTGEKPYECKECAKTFISLENFRRHMITHTGEGPYKCRDCGKVFIFPSALRTHERTHTGEKPYECKQCGKAFSCSSYIRIHKRTHTGEKPYECKECGKAFIYPTSFQGHMRMHTGEKPYKCKECGKAFSLHSSFQRHTRIHNYEKPLECKQCGKAFSLSTSLKKHMRMHNR</sequence>
<gene>
    <name type="primary">ZNF791</name>
</gene>
<organism>
    <name type="scientific">Pongo abelii</name>
    <name type="common">Sumatran orangutan</name>
    <name type="synonym">Pongo pygmaeus abelii</name>
    <dbReference type="NCBI Taxonomy" id="9601"/>
    <lineage>
        <taxon>Eukaryota</taxon>
        <taxon>Metazoa</taxon>
        <taxon>Chordata</taxon>
        <taxon>Craniata</taxon>
        <taxon>Vertebrata</taxon>
        <taxon>Euteleostomi</taxon>
        <taxon>Mammalia</taxon>
        <taxon>Eutheria</taxon>
        <taxon>Euarchontoglires</taxon>
        <taxon>Primates</taxon>
        <taxon>Haplorrhini</taxon>
        <taxon>Catarrhini</taxon>
        <taxon>Hominidae</taxon>
        <taxon>Pongo</taxon>
    </lineage>
</organism>
<protein>
    <recommendedName>
        <fullName>Zinc finger protein 791</fullName>
    </recommendedName>
</protein>
<comment type="function">
    <text>May be involved in transcriptional regulation.</text>
</comment>
<comment type="subcellular location">
    <subcellularLocation>
        <location evidence="3">Nucleus</location>
    </subcellularLocation>
</comment>
<comment type="similarity">
    <text evidence="3">Belongs to the krueppel C2H2-type zinc-finger protein family.</text>
</comment>